<keyword id="KW-0002">3D-structure</keyword>
<keyword id="KW-0067">ATP-binding</keyword>
<keyword id="KW-0436">Ligase</keyword>
<keyword id="KW-0460">Magnesium</keyword>
<keyword id="KW-0547">Nucleotide-binding</keyword>
<keyword id="KW-0630">Potassium</keyword>
<keyword id="KW-1267">Proteomics identification</keyword>
<keyword id="KW-1185">Reference proteome</keyword>
<organism>
    <name type="scientific">Homo sapiens</name>
    <name type="common">Human</name>
    <dbReference type="NCBI Taxonomy" id="9606"/>
    <lineage>
        <taxon>Eukaryota</taxon>
        <taxon>Metazoa</taxon>
        <taxon>Chordata</taxon>
        <taxon>Craniata</taxon>
        <taxon>Vertebrata</taxon>
        <taxon>Euteleostomi</taxon>
        <taxon>Mammalia</taxon>
        <taxon>Eutheria</taxon>
        <taxon>Euarchontoglires</taxon>
        <taxon>Primates</taxon>
        <taxon>Haplorrhini</taxon>
        <taxon>Catarrhini</taxon>
        <taxon>Hominidae</taxon>
        <taxon>Homo</taxon>
    </lineage>
</organism>
<name>TTL_HUMAN</name>
<accession>Q8NG68</accession>
<accession>Q585T3</accession>
<accession>Q7Z302</accession>
<accession>Q8N426</accession>
<gene>
    <name type="primary">TTL</name>
</gene>
<comment type="function">
    <text evidence="4">Catalyzes the post-translational addition of a tyrosine to the C-terminal end of detyrosinated alpha-tubulin.</text>
</comment>
<comment type="catalytic activity">
    <reaction evidence="2">
        <text>C-terminal L-alpha-aminoacyl-L-glutamyl-L-glutamyl-[tubulin] + L-tyrosine + ATP = C-terminal L-alpha-aminoacyl-L-glutamyl-L-glutamyl-L-tyrosyl-[tubulin] + ADP + phosphate + H(+)</text>
        <dbReference type="Rhea" id="RHEA:17605"/>
        <dbReference type="Rhea" id="RHEA-COMP:16434"/>
        <dbReference type="Rhea" id="RHEA-COMP:16435"/>
        <dbReference type="ChEBI" id="CHEBI:15378"/>
        <dbReference type="ChEBI" id="CHEBI:30616"/>
        <dbReference type="ChEBI" id="CHEBI:43474"/>
        <dbReference type="ChEBI" id="CHEBI:58315"/>
        <dbReference type="ChEBI" id="CHEBI:149554"/>
        <dbReference type="ChEBI" id="CHEBI:149555"/>
        <dbReference type="ChEBI" id="CHEBI:456216"/>
        <dbReference type="EC" id="6.3.2.25"/>
    </reaction>
</comment>
<comment type="cofactor">
    <cofactor evidence="1">
        <name>Mg(2+)</name>
        <dbReference type="ChEBI" id="CHEBI:18420"/>
    </cofactor>
</comment>
<comment type="cofactor">
    <cofactor evidence="1">
        <name>K(+)</name>
        <dbReference type="ChEBI" id="CHEBI:29103"/>
    </cofactor>
</comment>
<comment type="subunit">
    <text evidence="1">Monomer.</text>
</comment>
<comment type="similarity">
    <text evidence="5">Belongs to the tubulin--tyrosine ligase family.</text>
</comment>
<evidence type="ECO:0000250" key="1">
    <source>
        <dbReference type="UniProtKB" id="P38584"/>
    </source>
</evidence>
<evidence type="ECO:0000250" key="2">
    <source>
        <dbReference type="UniProtKB" id="Q9QXJ0"/>
    </source>
</evidence>
<evidence type="ECO:0000255" key="3">
    <source>
        <dbReference type="PROSITE-ProRule" id="PRU00568"/>
    </source>
</evidence>
<evidence type="ECO:0000269" key="4">
    <source>
    </source>
</evidence>
<evidence type="ECO:0000305" key="5"/>
<evidence type="ECO:0007829" key="6">
    <source>
        <dbReference type="PDB" id="8ASN"/>
    </source>
</evidence>
<sequence>MYTFVVRDENSSVYAEVSRLLLATGHWKRLRRDNPRFNLMLGERNRLPFGRLGHEPGLVQLVNYYRGADKLCRKASLVKLIKTSPELAESCTWFPESYVIYPTNLKTPVAPAQNGIQPPISNSRTDEREFFLASYNRKKEDGEGNVWIAKSSAGAKGEGILISSEASELLDFIDNQGQVHVIQKYLEHPLLLEPGHRKFDIRSWVLVDHQYNIYLYREGVLRTASEPYHVDNFQDKTCHLTNHCIQKEYSKNYGKYEEGNEMFFKEFNQYLTSALNITLESSILLQIKHIIRNCLLSVEPAISTKHLPYQSFQLFGFDFMVDEELKVWLIEVNGAPACAQKLYAELCQGIVDIAISSVFPPPDVEQPQTQPAAFIKL</sequence>
<reference key="1">
    <citation type="submission" date="2001-09" db="EMBL/GenBank/DDBJ databases">
        <title>Homo sapiens tubulin tyrosine ligase mRNA, complete cds.</title>
        <authorList>
            <person name="Miyazaki K."/>
            <person name="Okamoto Y."/>
            <person name="Kato C."/>
            <person name="Sakamoto M."/>
            <person name="Ohira M."/>
            <person name="Morohashi A."/>
            <person name="Nakagawara A."/>
        </authorList>
    </citation>
    <scope>NUCLEOTIDE SEQUENCE [MRNA]</scope>
</reference>
<reference key="2">
    <citation type="journal article" date="2005" name="Nature">
        <title>Generation and annotation of the DNA sequences of human chromosomes 2 and 4.</title>
        <authorList>
            <person name="Hillier L.W."/>
            <person name="Graves T.A."/>
            <person name="Fulton R.S."/>
            <person name="Fulton L.A."/>
            <person name="Pepin K.H."/>
            <person name="Minx P."/>
            <person name="Wagner-McPherson C."/>
            <person name="Layman D."/>
            <person name="Wylie K."/>
            <person name="Sekhon M."/>
            <person name="Becker M.C."/>
            <person name="Fewell G.A."/>
            <person name="Delehaunty K.D."/>
            <person name="Miner T.L."/>
            <person name="Nash W.E."/>
            <person name="Kremitzki C."/>
            <person name="Oddy L."/>
            <person name="Du H."/>
            <person name="Sun H."/>
            <person name="Bradshaw-Cordum H."/>
            <person name="Ali J."/>
            <person name="Carter J."/>
            <person name="Cordes M."/>
            <person name="Harris A."/>
            <person name="Isak A."/>
            <person name="van Brunt A."/>
            <person name="Nguyen C."/>
            <person name="Du F."/>
            <person name="Courtney L."/>
            <person name="Kalicki J."/>
            <person name="Ozersky P."/>
            <person name="Abbott S."/>
            <person name="Armstrong J."/>
            <person name="Belter E.A."/>
            <person name="Caruso L."/>
            <person name="Cedroni M."/>
            <person name="Cotton M."/>
            <person name="Davidson T."/>
            <person name="Desai A."/>
            <person name="Elliott G."/>
            <person name="Erb T."/>
            <person name="Fronick C."/>
            <person name="Gaige T."/>
            <person name="Haakenson W."/>
            <person name="Haglund K."/>
            <person name="Holmes A."/>
            <person name="Harkins R."/>
            <person name="Kim K."/>
            <person name="Kruchowski S.S."/>
            <person name="Strong C.M."/>
            <person name="Grewal N."/>
            <person name="Goyea E."/>
            <person name="Hou S."/>
            <person name="Levy A."/>
            <person name="Martinka S."/>
            <person name="Mead K."/>
            <person name="McLellan M.D."/>
            <person name="Meyer R."/>
            <person name="Randall-Maher J."/>
            <person name="Tomlinson C."/>
            <person name="Dauphin-Kohlberg S."/>
            <person name="Kozlowicz-Reilly A."/>
            <person name="Shah N."/>
            <person name="Swearengen-Shahid S."/>
            <person name="Snider J."/>
            <person name="Strong J.T."/>
            <person name="Thompson J."/>
            <person name="Yoakum M."/>
            <person name="Leonard S."/>
            <person name="Pearman C."/>
            <person name="Trani L."/>
            <person name="Radionenko M."/>
            <person name="Waligorski J.E."/>
            <person name="Wang C."/>
            <person name="Rock S.M."/>
            <person name="Tin-Wollam A.-M."/>
            <person name="Maupin R."/>
            <person name="Latreille P."/>
            <person name="Wendl M.C."/>
            <person name="Yang S.-P."/>
            <person name="Pohl C."/>
            <person name="Wallis J.W."/>
            <person name="Spieth J."/>
            <person name="Bieri T.A."/>
            <person name="Berkowicz N."/>
            <person name="Nelson J.O."/>
            <person name="Osborne J."/>
            <person name="Ding L."/>
            <person name="Meyer R."/>
            <person name="Sabo A."/>
            <person name="Shotland Y."/>
            <person name="Sinha P."/>
            <person name="Wohldmann P.E."/>
            <person name="Cook L.L."/>
            <person name="Hickenbotham M.T."/>
            <person name="Eldred J."/>
            <person name="Williams D."/>
            <person name="Jones T.A."/>
            <person name="She X."/>
            <person name="Ciccarelli F.D."/>
            <person name="Izaurralde E."/>
            <person name="Taylor J."/>
            <person name="Schmutz J."/>
            <person name="Myers R.M."/>
            <person name="Cox D.R."/>
            <person name="Huang X."/>
            <person name="McPherson J.D."/>
            <person name="Mardis E.R."/>
            <person name="Clifton S.W."/>
            <person name="Warren W.C."/>
            <person name="Chinwalla A.T."/>
            <person name="Eddy S.R."/>
            <person name="Marra M.A."/>
            <person name="Ovcharenko I."/>
            <person name="Furey T.S."/>
            <person name="Miller W."/>
            <person name="Eichler E.E."/>
            <person name="Bork P."/>
            <person name="Suyama M."/>
            <person name="Torrents D."/>
            <person name="Waterston R.H."/>
            <person name="Wilson R.K."/>
        </authorList>
    </citation>
    <scope>NUCLEOTIDE SEQUENCE [LARGE SCALE GENOMIC DNA]</scope>
</reference>
<reference key="3">
    <citation type="submission" date="2005-07" db="EMBL/GenBank/DDBJ databases">
        <authorList>
            <person name="Mural R.J."/>
            <person name="Istrail S."/>
            <person name="Sutton G.G."/>
            <person name="Florea L."/>
            <person name="Halpern A.L."/>
            <person name="Mobarry C.M."/>
            <person name="Lippert R."/>
            <person name="Walenz B."/>
            <person name="Shatkay H."/>
            <person name="Dew I."/>
            <person name="Miller J.R."/>
            <person name="Flanigan M.J."/>
            <person name="Edwards N.J."/>
            <person name="Bolanos R."/>
            <person name="Fasulo D."/>
            <person name="Halldorsson B.V."/>
            <person name="Hannenhalli S."/>
            <person name="Turner R."/>
            <person name="Yooseph S."/>
            <person name="Lu F."/>
            <person name="Nusskern D.R."/>
            <person name="Shue B.C."/>
            <person name="Zheng X.H."/>
            <person name="Zhong F."/>
            <person name="Delcher A.L."/>
            <person name="Huson D.H."/>
            <person name="Kravitz S.A."/>
            <person name="Mouchard L."/>
            <person name="Reinert K."/>
            <person name="Remington K.A."/>
            <person name="Clark A.G."/>
            <person name="Waterman M.S."/>
            <person name="Eichler E.E."/>
            <person name="Adams M.D."/>
            <person name="Hunkapiller M.W."/>
            <person name="Myers E.W."/>
            <person name="Venter J.C."/>
        </authorList>
    </citation>
    <scope>NUCLEOTIDE SEQUENCE [LARGE SCALE GENOMIC DNA]</scope>
</reference>
<reference key="4">
    <citation type="journal article" date="2004" name="Genome Res.">
        <title>The status, quality, and expansion of the NIH full-length cDNA project: the Mammalian Gene Collection (MGC).</title>
        <authorList>
            <consortium name="The MGC Project Team"/>
        </authorList>
    </citation>
    <scope>NUCLEOTIDE SEQUENCE [LARGE SCALE MRNA]</scope>
    <source>
        <tissue>Brain</tissue>
    </source>
</reference>
<reference key="5">
    <citation type="journal article" date="2007" name="BMC Genomics">
        <title>The full-ORF clone resource of the German cDNA consortium.</title>
        <authorList>
            <person name="Bechtel S."/>
            <person name="Rosenfelder H."/>
            <person name="Duda A."/>
            <person name="Schmidt C.P."/>
            <person name="Ernst U."/>
            <person name="Wellenreuther R."/>
            <person name="Mehrle A."/>
            <person name="Schuster C."/>
            <person name="Bahr A."/>
            <person name="Bloecker H."/>
            <person name="Heubner D."/>
            <person name="Hoerlein A."/>
            <person name="Michel G."/>
            <person name="Wedler H."/>
            <person name="Koehrer K."/>
            <person name="Ottenwaelder B."/>
            <person name="Poustka A."/>
            <person name="Wiemann S."/>
            <person name="Schupp I."/>
        </authorList>
    </citation>
    <scope>NUCLEOTIDE SEQUENCE [LARGE SCALE MRNA] OF 205-377</scope>
    <source>
        <tissue>Uterus</tissue>
    </source>
</reference>
<reference key="6">
    <citation type="journal article" date="2011" name="BMC Syst. Biol.">
        <title>Initial characterization of the human central proteome.</title>
        <authorList>
            <person name="Burkard T.R."/>
            <person name="Planyavsky M."/>
            <person name="Kaupe I."/>
            <person name="Breitwieser F.P."/>
            <person name="Buerckstuemmer T."/>
            <person name="Bennett K.L."/>
            <person name="Superti-Furga G."/>
            <person name="Colinge J."/>
        </authorList>
    </citation>
    <scope>IDENTIFICATION BY MASS SPECTROMETRY [LARGE SCALE ANALYSIS]</scope>
</reference>
<reference key="7">
    <citation type="journal article" date="2012" name="Proc. Natl. Acad. Sci. U.S.A.">
        <title>N-terminal acetylome analyses and functional insights of the N-terminal acetyltransferase NatB.</title>
        <authorList>
            <person name="Van Damme P."/>
            <person name="Lasa M."/>
            <person name="Polevoda B."/>
            <person name="Gazquez C."/>
            <person name="Elosegui-Artola A."/>
            <person name="Kim D.S."/>
            <person name="De Juan-Pardo E."/>
            <person name="Demeyer K."/>
            <person name="Hole K."/>
            <person name="Larrea E."/>
            <person name="Timmerman E."/>
            <person name="Prieto J."/>
            <person name="Arnesen T."/>
            <person name="Sherman F."/>
            <person name="Gevaert K."/>
            <person name="Aldabe R."/>
        </authorList>
    </citation>
    <scope>IDENTIFICATION BY MASS SPECTROMETRY [LARGE SCALE ANALYSIS]</scope>
</reference>
<reference key="8">
    <citation type="journal article" date="2015" name="Science">
        <title>Mitosis. Microtubule detyrosination guides chromosomes during mitosis.</title>
        <authorList>
            <person name="Barisic M."/>
            <person name="Silva e Sousa R."/>
            <person name="Tripathy S.K."/>
            <person name="Magiera M.M."/>
            <person name="Zaytsev A.V."/>
            <person name="Pereira A.L."/>
            <person name="Janke C."/>
            <person name="Grishchuk E.L."/>
            <person name="Maiato H."/>
        </authorList>
    </citation>
    <scope>FUNCTION</scope>
</reference>
<dbReference type="EC" id="6.3.2.25" evidence="2"/>
<dbReference type="EMBL" id="AB071393">
    <property type="protein sequence ID" value="BAC06832.2"/>
    <property type="molecule type" value="mRNA"/>
</dbReference>
<dbReference type="EMBL" id="AC012442">
    <property type="protein sequence ID" value="AAX81998.1"/>
    <property type="molecule type" value="Genomic_DNA"/>
</dbReference>
<dbReference type="EMBL" id="CH471217">
    <property type="protein sequence ID" value="EAW73589.1"/>
    <property type="molecule type" value="Genomic_DNA"/>
</dbReference>
<dbReference type="EMBL" id="BC036819">
    <property type="protein sequence ID" value="AAH36819.1"/>
    <property type="molecule type" value="mRNA"/>
</dbReference>
<dbReference type="EMBL" id="BX538316">
    <property type="protein sequence ID" value="CAD98091.1"/>
    <property type="molecule type" value="mRNA"/>
</dbReference>
<dbReference type="CCDS" id="CCDS2096.1"/>
<dbReference type="RefSeq" id="NP_714923.1">
    <property type="nucleotide sequence ID" value="NM_153712.5"/>
</dbReference>
<dbReference type="PDB" id="8ASN">
    <property type="method" value="X-ray"/>
    <property type="resolution" value="2.57 A"/>
    <property type="chains" value="F/G/H/I=2-377"/>
</dbReference>
<dbReference type="PDBsum" id="8ASN"/>
<dbReference type="SMR" id="Q8NG68"/>
<dbReference type="BioGRID" id="127297">
    <property type="interactions" value="20"/>
</dbReference>
<dbReference type="FunCoup" id="Q8NG68">
    <property type="interactions" value="110"/>
</dbReference>
<dbReference type="IntAct" id="Q8NG68">
    <property type="interactions" value="11"/>
</dbReference>
<dbReference type="STRING" id="9606.ENSP00000233336"/>
<dbReference type="BindingDB" id="Q8NG68"/>
<dbReference type="ChEMBL" id="CHEMBL5549"/>
<dbReference type="iPTMnet" id="Q8NG68"/>
<dbReference type="PhosphoSitePlus" id="Q8NG68"/>
<dbReference type="BioMuta" id="TTL"/>
<dbReference type="DMDM" id="47117358"/>
<dbReference type="jPOST" id="Q8NG68"/>
<dbReference type="MassIVE" id="Q8NG68"/>
<dbReference type="PaxDb" id="9606-ENSP00000233336"/>
<dbReference type="PeptideAtlas" id="Q8NG68"/>
<dbReference type="ProteomicsDB" id="73442"/>
<dbReference type="Pumba" id="Q8NG68"/>
<dbReference type="Antibodypedia" id="33272">
    <property type="antibodies" value="170 antibodies from 24 providers"/>
</dbReference>
<dbReference type="DNASU" id="150465"/>
<dbReference type="Ensembl" id="ENST00000233336.7">
    <property type="protein sequence ID" value="ENSP00000233336.5"/>
    <property type="gene ID" value="ENSG00000114999.8"/>
</dbReference>
<dbReference type="GeneID" id="150465"/>
<dbReference type="KEGG" id="hsa:150465"/>
<dbReference type="MANE-Select" id="ENST00000233336.7">
    <property type="protein sequence ID" value="ENSP00000233336.5"/>
    <property type="RefSeq nucleotide sequence ID" value="NM_153712.5"/>
    <property type="RefSeq protein sequence ID" value="NP_714923.1"/>
</dbReference>
<dbReference type="UCSC" id="uc002thu.4">
    <property type="organism name" value="human"/>
</dbReference>
<dbReference type="AGR" id="HGNC:21586"/>
<dbReference type="CTD" id="150465"/>
<dbReference type="DisGeNET" id="150465"/>
<dbReference type="GeneCards" id="TTL"/>
<dbReference type="HGNC" id="HGNC:21586">
    <property type="gene designation" value="TTL"/>
</dbReference>
<dbReference type="HPA" id="ENSG00000114999">
    <property type="expression patterns" value="Low tissue specificity"/>
</dbReference>
<dbReference type="MIM" id="608291">
    <property type="type" value="gene"/>
</dbReference>
<dbReference type="neXtProt" id="NX_Q8NG68"/>
<dbReference type="OpenTargets" id="ENSG00000114999"/>
<dbReference type="PharmGKB" id="PA134934330"/>
<dbReference type="VEuPathDB" id="HostDB:ENSG00000114999"/>
<dbReference type="eggNOG" id="KOG2157">
    <property type="taxonomic scope" value="Eukaryota"/>
</dbReference>
<dbReference type="GeneTree" id="ENSGT00940000161907"/>
<dbReference type="HOGENOM" id="CLU_010131_2_0_1"/>
<dbReference type="InParanoid" id="Q8NG68"/>
<dbReference type="OMA" id="LDKTCHL"/>
<dbReference type="OrthoDB" id="202825at2759"/>
<dbReference type="PAN-GO" id="Q8NG68">
    <property type="GO annotations" value="4 GO annotations based on evolutionary models"/>
</dbReference>
<dbReference type="PhylomeDB" id="Q8NG68"/>
<dbReference type="TreeFam" id="TF350555"/>
<dbReference type="BRENDA" id="6.3.2.25">
    <property type="organism ID" value="2681"/>
</dbReference>
<dbReference type="PathwayCommons" id="Q8NG68"/>
<dbReference type="Reactome" id="R-HSA-8955332">
    <property type="pathway name" value="Carboxyterminal post-translational modifications of tubulin"/>
</dbReference>
<dbReference type="SignaLink" id="Q8NG68"/>
<dbReference type="SIGNOR" id="Q8NG68"/>
<dbReference type="BioGRID-ORCS" id="150465">
    <property type="hits" value="13 hits in 1155 CRISPR screens"/>
</dbReference>
<dbReference type="ChiTaRS" id="TTL">
    <property type="organism name" value="human"/>
</dbReference>
<dbReference type="GenomeRNAi" id="150465"/>
<dbReference type="Pharos" id="Q8NG68">
    <property type="development level" value="Tchem"/>
</dbReference>
<dbReference type="PRO" id="PR:Q8NG68"/>
<dbReference type="Proteomes" id="UP000005640">
    <property type="component" value="Chromosome 2"/>
</dbReference>
<dbReference type="RNAct" id="Q8NG68">
    <property type="molecule type" value="protein"/>
</dbReference>
<dbReference type="Bgee" id="ENSG00000114999">
    <property type="expression patterns" value="Expressed in dorsal root ganglion and 191 other cell types or tissues"/>
</dbReference>
<dbReference type="GO" id="GO:0005876">
    <property type="term" value="C:spindle microtubule"/>
    <property type="evidence" value="ECO:0000314"/>
    <property type="project" value="UniProtKB"/>
</dbReference>
<dbReference type="GO" id="GO:0005524">
    <property type="term" value="F:ATP binding"/>
    <property type="evidence" value="ECO:0007669"/>
    <property type="project" value="UniProtKB-KW"/>
</dbReference>
<dbReference type="GO" id="GO:0004835">
    <property type="term" value="F:tubulin-tyrosine ligase activity"/>
    <property type="evidence" value="ECO:0000315"/>
    <property type="project" value="UniProtKB"/>
</dbReference>
<dbReference type="GO" id="GO:0000226">
    <property type="term" value="P:microtubule cytoskeleton organization"/>
    <property type="evidence" value="ECO:0000318"/>
    <property type="project" value="GO_Central"/>
</dbReference>
<dbReference type="GO" id="GO:0045931">
    <property type="term" value="P:positive regulation of mitotic cell cycle"/>
    <property type="evidence" value="ECO:0000315"/>
    <property type="project" value="UniProtKB"/>
</dbReference>
<dbReference type="GO" id="GO:0043687">
    <property type="term" value="P:post-translational protein modification"/>
    <property type="evidence" value="ECO:0000315"/>
    <property type="project" value="UniProtKB"/>
</dbReference>
<dbReference type="GO" id="GO:0030516">
    <property type="term" value="P:regulation of axon extension"/>
    <property type="evidence" value="ECO:0007669"/>
    <property type="project" value="Ensembl"/>
</dbReference>
<dbReference type="GO" id="GO:0090235">
    <property type="term" value="P:regulation of metaphase plate congression"/>
    <property type="evidence" value="ECO:0000315"/>
    <property type="project" value="UniProtKB"/>
</dbReference>
<dbReference type="FunFam" id="3.30.470.20:FF:000049">
    <property type="entry name" value="tubulin--tyrosine ligase"/>
    <property type="match status" value="1"/>
</dbReference>
<dbReference type="FunFam" id="3.40.50.11480:FF:000001">
    <property type="entry name" value="tubulin--tyrosine ligase"/>
    <property type="match status" value="1"/>
</dbReference>
<dbReference type="Gene3D" id="3.40.50.11480">
    <property type="match status" value="1"/>
</dbReference>
<dbReference type="Gene3D" id="3.30.470.20">
    <property type="entry name" value="ATP-grasp fold, B domain"/>
    <property type="match status" value="1"/>
</dbReference>
<dbReference type="InterPro" id="IPR004344">
    <property type="entry name" value="TTL/TTLL_fam"/>
</dbReference>
<dbReference type="InterPro" id="IPR052492">
    <property type="entry name" value="Tubulin-tyrosine_ligase"/>
</dbReference>
<dbReference type="PANTHER" id="PTHR46570">
    <property type="entry name" value="TUBULIN--TYROSINE LIGASE"/>
    <property type="match status" value="1"/>
</dbReference>
<dbReference type="PANTHER" id="PTHR46570:SF1">
    <property type="entry name" value="TUBULIN--TYROSINE LIGASE"/>
    <property type="match status" value="1"/>
</dbReference>
<dbReference type="Pfam" id="PF03133">
    <property type="entry name" value="TTL"/>
    <property type="match status" value="1"/>
</dbReference>
<dbReference type="SUPFAM" id="SSF56059">
    <property type="entry name" value="Glutathione synthetase ATP-binding domain-like"/>
    <property type="match status" value="1"/>
</dbReference>
<dbReference type="PROSITE" id="PS51221">
    <property type="entry name" value="TTL"/>
    <property type="match status" value="1"/>
</dbReference>
<proteinExistence type="evidence at protein level"/>
<feature type="chain" id="PRO_0000212434" description="Tubulin--tyrosine ligase">
    <location>
        <begin position="1"/>
        <end position="377"/>
    </location>
</feature>
<feature type="domain" description="TTL" evidence="3">
    <location>
        <begin position="3"/>
        <end position="370"/>
    </location>
</feature>
<feature type="sequence conflict" description="In Ref. 5; CAD98091." evidence="5" ref="5">
    <original>I</original>
    <variation>V</variation>
    <location>
        <position position="245"/>
    </location>
</feature>
<feature type="strand" evidence="6">
    <location>
        <begin position="3"/>
        <end position="6"/>
    </location>
</feature>
<feature type="helix" evidence="6">
    <location>
        <begin position="12"/>
        <end position="23"/>
    </location>
</feature>
<feature type="strand" evidence="6">
    <location>
        <begin position="38"/>
        <end position="41"/>
    </location>
</feature>
<feature type="strand" evidence="6">
    <location>
        <begin position="44"/>
        <end position="46"/>
    </location>
</feature>
<feature type="helix" evidence="6">
    <location>
        <begin position="49"/>
        <end position="51"/>
    </location>
</feature>
<feature type="strand" evidence="6">
    <location>
        <begin position="61"/>
        <end position="64"/>
    </location>
</feature>
<feature type="helix" evidence="6">
    <location>
        <begin position="69"/>
        <end position="72"/>
    </location>
</feature>
<feature type="helix" evidence="6">
    <location>
        <begin position="74"/>
        <end position="83"/>
    </location>
</feature>
<feature type="helix" evidence="6">
    <location>
        <begin position="85"/>
        <end position="88"/>
    </location>
</feature>
<feature type="strand" evidence="6">
    <location>
        <begin position="97"/>
        <end position="100"/>
    </location>
</feature>
<feature type="helix" evidence="6">
    <location>
        <begin position="128"/>
        <end position="140"/>
    </location>
</feature>
<feature type="strand" evidence="6">
    <location>
        <begin position="147"/>
        <end position="150"/>
    </location>
</feature>
<feature type="strand" evidence="6">
    <location>
        <begin position="162"/>
        <end position="164"/>
    </location>
</feature>
<feature type="helix" evidence="6">
    <location>
        <begin position="167"/>
        <end position="174"/>
    </location>
</feature>
<feature type="strand" evidence="6">
    <location>
        <begin position="176"/>
        <end position="178"/>
    </location>
</feature>
<feature type="strand" evidence="6">
    <location>
        <begin position="180"/>
        <end position="184"/>
    </location>
</feature>
<feature type="strand" evidence="6">
    <location>
        <begin position="187"/>
        <end position="189"/>
    </location>
</feature>
<feature type="turn" evidence="6">
    <location>
        <begin position="193"/>
        <end position="196"/>
    </location>
</feature>
<feature type="strand" evidence="6">
    <location>
        <begin position="199"/>
        <end position="207"/>
    </location>
</feature>
<feature type="strand" evidence="6">
    <location>
        <begin position="213"/>
        <end position="217"/>
    </location>
</feature>
<feature type="strand" evidence="6">
    <location>
        <begin position="220"/>
        <end position="223"/>
    </location>
</feature>
<feature type="helix" evidence="6">
    <location>
        <begin position="236"/>
        <end position="239"/>
    </location>
</feature>
<feature type="helix" evidence="6">
    <location>
        <begin position="243"/>
        <end position="249"/>
    </location>
</feature>
<feature type="turn" evidence="6">
    <location>
        <begin position="251"/>
        <end position="254"/>
    </location>
</feature>
<feature type="strand" evidence="6">
    <location>
        <begin position="255"/>
        <end position="257"/>
    </location>
</feature>
<feature type="strand" evidence="6">
    <location>
        <begin position="261"/>
        <end position="263"/>
    </location>
</feature>
<feature type="helix" evidence="6">
    <location>
        <begin position="264"/>
        <end position="270"/>
    </location>
</feature>
<feature type="strand" evidence="6">
    <location>
        <begin position="271"/>
        <end position="276"/>
    </location>
</feature>
<feature type="turn" evidence="6">
    <location>
        <begin position="280"/>
        <end position="283"/>
    </location>
</feature>
<feature type="helix" evidence="6">
    <location>
        <begin position="284"/>
        <end position="297"/>
    </location>
</feature>
<feature type="helix" evidence="6">
    <location>
        <begin position="299"/>
        <end position="302"/>
    </location>
</feature>
<feature type="strand" evidence="6">
    <location>
        <begin position="307"/>
        <end position="311"/>
    </location>
</feature>
<feature type="strand" evidence="6">
    <location>
        <begin position="313"/>
        <end position="322"/>
    </location>
</feature>
<feature type="strand" evidence="6">
    <location>
        <begin position="327"/>
        <end position="335"/>
    </location>
</feature>
<feature type="helix" evidence="6">
    <location>
        <begin position="340"/>
        <end position="342"/>
    </location>
</feature>
<feature type="helix" evidence="6">
    <location>
        <begin position="343"/>
        <end position="353"/>
    </location>
</feature>
<feature type="turn" evidence="6">
    <location>
        <begin position="354"/>
        <end position="358"/>
    </location>
</feature>
<feature type="strand" evidence="6">
    <location>
        <begin position="373"/>
        <end position="376"/>
    </location>
</feature>
<protein>
    <recommendedName>
        <fullName>Tubulin--tyrosine ligase</fullName>
        <shortName>TTL</shortName>
        <ecNumber evidence="2">6.3.2.25</ecNumber>
    </recommendedName>
</protein>